<evidence type="ECO:0000250" key="1"/>
<evidence type="ECO:0000250" key="2">
    <source>
        <dbReference type="UniProtKB" id="P08648"/>
    </source>
</evidence>
<evidence type="ECO:0000255" key="3"/>
<evidence type="ECO:0000255" key="4">
    <source>
        <dbReference type="PROSITE-ProRule" id="PRU00219"/>
    </source>
</evidence>
<evidence type="ECO:0000255" key="5">
    <source>
        <dbReference type="PROSITE-ProRule" id="PRU00803"/>
    </source>
</evidence>
<evidence type="ECO:0000305" key="6"/>
<evidence type="ECO:0007744" key="7">
    <source>
    </source>
</evidence>
<evidence type="ECO:0007829" key="8">
    <source>
        <dbReference type="PDB" id="1CK4"/>
    </source>
</evidence>
<evidence type="ECO:0007829" key="9">
    <source>
        <dbReference type="PDB" id="1MHP"/>
    </source>
</evidence>
<organism>
    <name type="scientific">Rattus norvegicus</name>
    <name type="common">Rat</name>
    <dbReference type="NCBI Taxonomy" id="10116"/>
    <lineage>
        <taxon>Eukaryota</taxon>
        <taxon>Metazoa</taxon>
        <taxon>Chordata</taxon>
        <taxon>Craniata</taxon>
        <taxon>Vertebrata</taxon>
        <taxon>Euteleostomi</taxon>
        <taxon>Mammalia</taxon>
        <taxon>Eutheria</taxon>
        <taxon>Euarchontoglires</taxon>
        <taxon>Glires</taxon>
        <taxon>Rodentia</taxon>
        <taxon>Myomorpha</taxon>
        <taxon>Muroidea</taxon>
        <taxon>Muridae</taxon>
        <taxon>Murinae</taxon>
        <taxon>Rattus</taxon>
    </lineage>
</organism>
<accession>P18614</accession>
<keyword id="KW-0002">3D-structure</keyword>
<keyword id="KW-0106">Calcium</keyword>
<keyword id="KW-0130">Cell adhesion</keyword>
<keyword id="KW-1015">Disulfide bond</keyword>
<keyword id="KW-0325">Glycoprotein</keyword>
<keyword id="KW-0401">Integrin</keyword>
<keyword id="KW-0460">Magnesium</keyword>
<keyword id="KW-0472">Membrane</keyword>
<keyword id="KW-0479">Metal-binding</keyword>
<keyword id="KW-0675">Receptor</keyword>
<keyword id="KW-1185">Reference proteome</keyword>
<keyword id="KW-0677">Repeat</keyword>
<keyword id="KW-0732">Signal</keyword>
<keyword id="KW-0812">Transmembrane</keyword>
<keyword id="KW-1133">Transmembrane helix</keyword>
<proteinExistence type="evidence at protein level"/>
<feature type="signal peptide">
    <location>
        <begin position="1"/>
        <end position="28"/>
    </location>
</feature>
<feature type="chain" id="PRO_0000016231" description="Integrin alpha-1">
    <location>
        <begin position="29"/>
        <end position="1180"/>
    </location>
</feature>
<feature type="topological domain" description="Extracellular" evidence="3">
    <location>
        <begin position="29"/>
        <end position="1142"/>
    </location>
</feature>
<feature type="transmembrane region" description="Helical" evidence="3">
    <location>
        <begin position="1143"/>
        <end position="1165"/>
    </location>
</feature>
<feature type="topological domain" description="Cytoplasmic" evidence="3">
    <location>
        <begin position="1166"/>
        <end position="1180"/>
    </location>
</feature>
<feature type="repeat" description="FG-GAP 1" evidence="5">
    <location>
        <begin position="30"/>
        <end position="91"/>
    </location>
</feature>
<feature type="repeat" description="FG-GAP 2" evidence="5">
    <location>
        <begin position="101"/>
        <end position="160"/>
    </location>
</feature>
<feature type="domain" description="VWFA" evidence="4">
    <location>
        <begin position="175"/>
        <end position="364"/>
    </location>
</feature>
<feature type="repeat" description="FG-GAP 3" evidence="5">
    <location>
        <begin position="365"/>
        <end position="417"/>
    </location>
</feature>
<feature type="repeat" description="FG-GAP 4" evidence="5">
    <location>
        <begin position="422"/>
        <end position="474"/>
    </location>
</feature>
<feature type="repeat" description="FG-GAP 5" evidence="5">
    <location>
        <begin position="475"/>
        <end position="537"/>
    </location>
</feature>
<feature type="repeat" description="FG-GAP 6" evidence="5">
    <location>
        <begin position="556"/>
        <end position="614"/>
    </location>
</feature>
<feature type="repeat" description="FG-GAP 7" evidence="5">
    <location>
        <begin position="618"/>
        <end position="678"/>
    </location>
</feature>
<feature type="short sequence motif" description="GFFKR motif">
    <location>
        <begin position="1168"/>
        <end position="1172"/>
    </location>
</feature>
<feature type="binding site" evidence="2">
    <location>
        <position position="497"/>
    </location>
    <ligand>
        <name>Ca(2+)</name>
        <dbReference type="ChEBI" id="CHEBI:29108"/>
        <label>1</label>
    </ligand>
</feature>
<feature type="binding site" evidence="2">
    <location>
        <position position="499"/>
    </location>
    <ligand>
        <name>Ca(2+)</name>
        <dbReference type="ChEBI" id="CHEBI:29108"/>
        <label>1</label>
    </ligand>
</feature>
<feature type="binding site" evidence="2">
    <location>
        <position position="501"/>
    </location>
    <ligand>
        <name>Ca(2+)</name>
        <dbReference type="ChEBI" id="CHEBI:29108"/>
        <label>1</label>
    </ligand>
</feature>
<feature type="binding site" evidence="2">
    <location>
        <position position="505"/>
    </location>
    <ligand>
        <name>Ca(2+)</name>
        <dbReference type="ChEBI" id="CHEBI:29108"/>
        <label>1</label>
    </ligand>
</feature>
<feature type="binding site" evidence="2">
    <location>
        <position position="579"/>
    </location>
    <ligand>
        <name>Ca(2+)</name>
        <dbReference type="ChEBI" id="CHEBI:29108"/>
        <label>2</label>
    </ligand>
</feature>
<feature type="binding site" evidence="2">
    <location>
        <position position="581"/>
    </location>
    <ligand>
        <name>Ca(2+)</name>
        <dbReference type="ChEBI" id="CHEBI:29108"/>
        <label>2</label>
    </ligand>
</feature>
<feature type="binding site" evidence="2">
    <location>
        <position position="583"/>
    </location>
    <ligand>
        <name>Ca(2+)</name>
        <dbReference type="ChEBI" id="CHEBI:29108"/>
        <label>2</label>
    </ligand>
</feature>
<feature type="binding site" evidence="2">
    <location>
        <position position="587"/>
    </location>
    <ligand>
        <name>Ca(2+)</name>
        <dbReference type="ChEBI" id="CHEBI:29108"/>
        <label>2</label>
    </ligand>
</feature>
<feature type="binding site" evidence="2">
    <location>
        <position position="641"/>
    </location>
    <ligand>
        <name>Ca(2+)</name>
        <dbReference type="ChEBI" id="CHEBI:29108"/>
        <label>3</label>
    </ligand>
</feature>
<feature type="binding site" evidence="2">
    <location>
        <position position="643"/>
    </location>
    <ligand>
        <name>Ca(2+)</name>
        <dbReference type="ChEBI" id="CHEBI:29108"/>
        <label>3</label>
    </ligand>
</feature>
<feature type="binding site" evidence="2">
    <location>
        <position position="645"/>
    </location>
    <ligand>
        <name>Ca(2+)</name>
        <dbReference type="ChEBI" id="CHEBI:29108"/>
        <label>3</label>
    </ligand>
</feature>
<feature type="binding site" evidence="2">
    <location>
        <position position="649"/>
    </location>
    <ligand>
        <name>Ca(2+)</name>
        <dbReference type="ChEBI" id="CHEBI:29108"/>
        <label>3</label>
    </ligand>
</feature>
<feature type="glycosylation site" description="N-linked (GlcNAc...) asparagine" evidence="3">
    <location>
        <position position="100"/>
    </location>
</feature>
<feature type="glycosylation site" description="N-linked (GlcNAc...) asparagine" evidence="3">
    <location>
        <position position="105"/>
    </location>
</feature>
<feature type="glycosylation site" description="N-linked (GlcNAc...) asparagine" evidence="3">
    <location>
        <position position="112"/>
    </location>
</feature>
<feature type="glycosylation site" description="N-linked (GlcNAc...) asparagine" evidence="3">
    <location>
        <position position="217"/>
    </location>
</feature>
<feature type="glycosylation site" description="N-linked (GlcNAc...) asparagine" evidence="3">
    <location>
        <position position="317"/>
    </location>
</feature>
<feature type="glycosylation site" description="N-linked (GlcNAc...) asparagine" evidence="3">
    <location>
        <position position="341"/>
    </location>
</feature>
<feature type="glycosylation site" description="N-linked (GlcNAc...) asparagine" evidence="3">
    <location>
        <position position="402"/>
    </location>
</feature>
<feature type="glycosylation site" description="N-linked (GlcNAc...) asparagine" evidence="7">
    <location>
        <position position="418"/>
    </location>
</feature>
<feature type="glycosylation site" description="N-linked (GlcNAc...) asparagine" evidence="3">
    <location>
        <position position="459"/>
    </location>
</feature>
<feature type="glycosylation site" description="N-linked (GlcNAc...) asparagine" evidence="3">
    <location>
        <position position="531"/>
    </location>
</feature>
<feature type="glycosylation site" description="N-linked (GlcNAc...) asparagine" evidence="3">
    <location>
        <position position="698"/>
    </location>
</feature>
<feature type="glycosylation site" description="N-linked (GlcNAc...) asparagine" evidence="3">
    <location>
        <position position="747"/>
    </location>
</feature>
<feature type="glycosylation site" description="N-linked (GlcNAc...) asparagine" evidence="3">
    <location>
        <position position="779"/>
    </location>
</feature>
<feature type="glycosylation site" description="N-linked (GlcNAc...) asparagine" evidence="3">
    <location>
        <position position="820"/>
    </location>
</feature>
<feature type="glycosylation site" description="N-linked (GlcNAc...) asparagine" evidence="3">
    <location>
        <position position="839"/>
    </location>
</feature>
<feature type="glycosylation site" description="N-linked (GlcNAc...) asparagine" evidence="3">
    <location>
        <position position="882"/>
    </location>
</feature>
<feature type="glycosylation site" description="N-linked (GlcNAc...) asparagine" evidence="3">
    <location>
        <position position="907"/>
    </location>
</feature>
<feature type="glycosylation site" description="N-linked (GlcNAc...) asparagine" evidence="3">
    <location>
        <position position="938"/>
    </location>
</feature>
<feature type="glycosylation site" description="N-linked (GlcNAc...) asparagine" evidence="3">
    <location>
        <position position="965"/>
    </location>
</feature>
<feature type="glycosylation site" description="N-linked (GlcNAc...) asparagine" evidence="3">
    <location>
        <position position="973"/>
    </location>
</feature>
<feature type="glycosylation site" description="N-linked (GlcNAc...) asparagine" evidence="3">
    <location>
        <position position="1007"/>
    </location>
</feature>
<feature type="glycosylation site" description="N-linked (GlcNAc...) asparagine" evidence="3">
    <location>
        <position position="1084"/>
    </location>
</feature>
<feature type="glycosylation site" description="N-linked (GlcNAc...) asparagine" evidence="3">
    <location>
        <position position="1103"/>
    </location>
</feature>
<feature type="glycosylation site" description="N-linked (GlcNAc...) asparagine" evidence="3">
    <location>
        <position position="1114"/>
    </location>
</feature>
<feature type="disulfide bond" evidence="1">
    <location>
        <begin position="82"/>
        <end position="92"/>
    </location>
</feature>
<feature type="disulfide bond" evidence="1">
    <location>
        <begin position="687"/>
        <end position="696"/>
    </location>
</feature>
<feature type="disulfide bond" evidence="1">
    <location>
        <begin position="702"/>
        <end position="755"/>
    </location>
</feature>
<feature type="disulfide bond" evidence="1">
    <location>
        <begin position="807"/>
        <end position="813"/>
    </location>
</feature>
<feature type="disulfide bond" evidence="1">
    <location>
        <begin position="877"/>
        <end position="885"/>
    </location>
</feature>
<feature type="disulfide bond" evidence="1">
    <location>
        <begin position="1029"/>
        <end position="1062"/>
    </location>
</feature>
<feature type="disulfide bond" evidence="1">
    <location>
        <begin position="1066"/>
        <end position="1073"/>
    </location>
</feature>
<feature type="strand" evidence="8">
    <location>
        <begin position="171"/>
        <end position="178"/>
    </location>
</feature>
<feature type="helix" evidence="8">
    <location>
        <begin position="186"/>
        <end position="197"/>
    </location>
</feature>
<feature type="strand" evidence="8">
    <location>
        <begin position="208"/>
        <end position="222"/>
    </location>
</feature>
<feature type="turn" evidence="8">
    <location>
        <begin position="224"/>
        <end position="226"/>
    </location>
</feature>
<feature type="helix" evidence="8">
    <location>
        <begin position="230"/>
        <end position="238"/>
    </location>
</feature>
<feature type="helix" evidence="8">
    <location>
        <begin position="250"/>
        <end position="259"/>
    </location>
</feature>
<feature type="turn" evidence="9">
    <location>
        <begin position="260"/>
        <end position="262"/>
    </location>
</feature>
<feature type="helix" evidence="8">
    <location>
        <begin position="264"/>
        <end position="266"/>
    </location>
</feature>
<feature type="strand" evidence="8">
    <location>
        <begin position="273"/>
        <end position="282"/>
    </location>
</feature>
<feature type="helix" evidence="8">
    <location>
        <begin position="287"/>
        <end position="289"/>
    </location>
</feature>
<feature type="helix" evidence="8">
    <location>
        <begin position="290"/>
        <end position="299"/>
    </location>
</feature>
<feature type="strand" evidence="8">
    <location>
        <begin position="302"/>
        <end position="309"/>
    </location>
</feature>
<feature type="helix" evidence="8">
    <location>
        <begin position="311"/>
        <end position="315"/>
    </location>
</feature>
<feature type="helix" evidence="8">
    <location>
        <begin position="321"/>
        <end position="328"/>
    </location>
</feature>
<feature type="helix" evidence="8">
    <location>
        <begin position="335"/>
        <end position="338"/>
    </location>
</feature>
<feature type="strand" evidence="8">
    <location>
        <begin position="339"/>
        <end position="345"/>
    </location>
</feature>
<feature type="helix" evidence="8">
    <location>
        <begin position="346"/>
        <end position="350"/>
    </location>
</feature>
<feature type="helix" evidence="8">
    <location>
        <begin position="352"/>
        <end position="359"/>
    </location>
</feature>
<reference key="1">
    <citation type="journal article" date="1990" name="J. Cell Biol.">
        <title>Molecular cloning of the rat integrin alpha 1-subunit: a receptor for laminin and collagen.</title>
        <authorList>
            <person name="Ignatius M.J."/>
            <person name="Large T.H."/>
            <person name="Houde M."/>
            <person name="Tawil J.W."/>
            <person name="Barton A."/>
            <person name="Esch F."/>
            <person name="Carbonetto S."/>
            <person name="Reichardt L.F."/>
        </authorList>
    </citation>
    <scope>NUCLEOTIDE SEQUENCE [MRNA]</scope>
</reference>
<reference key="2">
    <citation type="journal article" date="2013" name="J. Proteome Res.">
        <title>Site-specific glycan-peptide analysis for determination of N-glycoproteome heterogeneity.</title>
        <authorList>
            <person name="Parker B.L."/>
            <person name="Thaysen-Andersen M."/>
            <person name="Solis N."/>
            <person name="Scott N.E."/>
            <person name="Larsen M.R."/>
            <person name="Graham M.E."/>
            <person name="Packer N.H."/>
            <person name="Cordwell S.J."/>
        </authorList>
    </citation>
    <scope>GLYCOSYLATION [LARGE SCALE ANALYSIS] AT ASN-418</scope>
    <scope>IDENTIFICATION BY MASS SPECTROMETRY [LARGE SCALE ANALYSIS]</scope>
    <source>
        <tissue>Brain</tissue>
    </source>
</reference>
<reference key="3">
    <citation type="journal article" date="1999" name="FEBS Lett.">
        <title>Crystal structure of the alpha1beta1 integrin I-domain: insights into integrin I-domain function.</title>
        <authorList>
            <person name="Nolte M."/>
            <person name="Pepinsky R.B."/>
            <person name="Venyaminov S.Y."/>
            <person name="Koteliansky V."/>
            <person name="Gotwals P.J."/>
            <person name="Karpusas M."/>
        </authorList>
    </citation>
    <scope>X-RAY CRYSTALLOGRAPHY (2.1 ANGSTROMS) OF 151-364</scope>
</reference>
<dbReference type="EMBL" id="X52140">
    <property type="protein sequence ID" value="CAA36384.1"/>
    <property type="molecule type" value="mRNA"/>
</dbReference>
<dbReference type="PIR" id="A35854">
    <property type="entry name" value="A35854"/>
</dbReference>
<dbReference type="RefSeq" id="NP_112256.1">
    <property type="nucleotide sequence ID" value="NM_030994.2"/>
</dbReference>
<dbReference type="PDB" id="1CK4">
    <property type="method" value="X-ray"/>
    <property type="resolution" value="2.20 A"/>
    <property type="chains" value="A/B=167-364"/>
</dbReference>
<dbReference type="PDB" id="1MHP">
    <property type="method" value="X-ray"/>
    <property type="resolution" value="2.80 A"/>
    <property type="chains" value="A/B=169-360"/>
</dbReference>
<dbReference type="PDB" id="2B2X">
    <property type="method" value="X-ray"/>
    <property type="resolution" value="2.20 A"/>
    <property type="chains" value="A/B=151-364"/>
</dbReference>
<dbReference type="PDBsum" id="1CK4"/>
<dbReference type="PDBsum" id="1MHP"/>
<dbReference type="PDBsum" id="2B2X"/>
<dbReference type="BMRB" id="P18614"/>
<dbReference type="SMR" id="P18614"/>
<dbReference type="CORUM" id="P18614"/>
<dbReference type="FunCoup" id="P18614">
    <property type="interactions" value="1252"/>
</dbReference>
<dbReference type="IntAct" id="P18614">
    <property type="interactions" value="2"/>
</dbReference>
<dbReference type="STRING" id="10116.ENSRNOP00000074337"/>
<dbReference type="GlyCosmos" id="P18614">
    <property type="glycosylation" value="24 sites, 3 glycans"/>
</dbReference>
<dbReference type="GlyGen" id="P18614">
    <property type="glycosylation" value="24 sites, 3 N-linked glycans (2 sites)"/>
</dbReference>
<dbReference type="iPTMnet" id="P18614"/>
<dbReference type="PhosphoSitePlus" id="P18614"/>
<dbReference type="SwissPalm" id="P18614"/>
<dbReference type="jPOST" id="P18614"/>
<dbReference type="PaxDb" id="10116-ENSRNOP00000016353"/>
<dbReference type="Ensembl" id="ENSRNOT00000106157.1">
    <property type="protein sequence ID" value="ENSRNOP00000086956.1"/>
    <property type="gene ID" value="ENSRNOG00000053550.2"/>
</dbReference>
<dbReference type="GeneID" id="25118"/>
<dbReference type="KEGG" id="rno:25118"/>
<dbReference type="AGR" id="RGD:2923"/>
<dbReference type="CTD" id="3672"/>
<dbReference type="RGD" id="2923">
    <property type="gene designation" value="Itga1"/>
</dbReference>
<dbReference type="eggNOG" id="KOG3637">
    <property type="taxonomic scope" value="Eukaryota"/>
</dbReference>
<dbReference type="GeneTree" id="ENSGT00940000157646"/>
<dbReference type="HOGENOM" id="CLU_004111_2_1_1"/>
<dbReference type="InParanoid" id="P18614"/>
<dbReference type="OMA" id="TCCSLLK"/>
<dbReference type="OrthoDB" id="30096at9989"/>
<dbReference type="PhylomeDB" id="P18614"/>
<dbReference type="Reactome" id="R-RNO-216083">
    <property type="pathway name" value="Integrin cell surface interactions"/>
</dbReference>
<dbReference type="Reactome" id="R-RNO-445355">
    <property type="pathway name" value="Smooth Muscle Contraction"/>
</dbReference>
<dbReference type="EvolutionaryTrace" id="P18614"/>
<dbReference type="PRO" id="PR:P18614"/>
<dbReference type="Proteomes" id="UP000002494">
    <property type="component" value="Chromosome 2"/>
</dbReference>
<dbReference type="Bgee" id="ENSRNOG00000053550">
    <property type="expression patterns" value="Expressed in adult mammalian kidney and 18 other cell types or tissues"/>
</dbReference>
<dbReference type="GO" id="GO:0001669">
    <property type="term" value="C:acrosomal vesicle"/>
    <property type="evidence" value="ECO:0000314"/>
    <property type="project" value="RGD"/>
</dbReference>
<dbReference type="GO" id="GO:0045178">
    <property type="term" value="C:basal part of cell"/>
    <property type="evidence" value="ECO:0000266"/>
    <property type="project" value="RGD"/>
</dbReference>
<dbReference type="GO" id="GO:0009986">
    <property type="term" value="C:cell surface"/>
    <property type="evidence" value="ECO:0000266"/>
    <property type="project" value="RGD"/>
</dbReference>
<dbReference type="GO" id="GO:0009897">
    <property type="term" value="C:external side of plasma membrane"/>
    <property type="evidence" value="ECO:0000314"/>
    <property type="project" value="RGD"/>
</dbReference>
<dbReference type="GO" id="GO:0005925">
    <property type="term" value="C:focal adhesion"/>
    <property type="evidence" value="ECO:0000266"/>
    <property type="project" value="RGD"/>
</dbReference>
<dbReference type="GO" id="GO:0034665">
    <property type="term" value="C:integrin alpha1-beta1 complex"/>
    <property type="evidence" value="ECO:0000266"/>
    <property type="project" value="RGD"/>
</dbReference>
<dbReference type="GO" id="GO:0008305">
    <property type="term" value="C:integrin complex"/>
    <property type="evidence" value="ECO:0000318"/>
    <property type="project" value="GO_Central"/>
</dbReference>
<dbReference type="GO" id="GO:0043204">
    <property type="term" value="C:perikaryon"/>
    <property type="evidence" value="ECO:0000314"/>
    <property type="project" value="RGD"/>
</dbReference>
<dbReference type="GO" id="GO:0005518">
    <property type="term" value="F:collagen binding"/>
    <property type="evidence" value="ECO:0000315"/>
    <property type="project" value="RGD"/>
</dbReference>
<dbReference type="GO" id="GO:0098639">
    <property type="term" value="F:collagen binding involved in cell-matrix adhesion"/>
    <property type="evidence" value="ECO:0000266"/>
    <property type="project" value="RGD"/>
</dbReference>
<dbReference type="GO" id="GO:0005178">
    <property type="term" value="F:integrin binding"/>
    <property type="evidence" value="ECO:0000318"/>
    <property type="project" value="GO_Central"/>
</dbReference>
<dbReference type="GO" id="GO:0046872">
    <property type="term" value="F:metal ion binding"/>
    <property type="evidence" value="ECO:0007669"/>
    <property type="project" value="UniProtKB-KW"/>
</dbReference>
<dbReference type="GO" id="GO:0019211">
    <property type="term" value="F:phosphatase activator activity"/>
    <property type="evidence" value="ECO:0000250"/>
    <property type="project" value="UniProtKB"/>
</dbReference>
<dbReference type="GO" id="GO:0019903">
    <property type="term" value="F:protein phosphatase binding"/>
    <property type="evidence" value="ECO:0000266"/>
    <property type="project" value="RGD"/>
</dbReference>
<dbReference type="GO" id="GO:0005102">
    <property type="term" value="F:signaling receptor binding"/>
    <property type="evidence" value="ECO:0000353"/>
    <property type="project" value="RGD"/>
</dbReference>
<dbReference type="GO" id="GO:0007155">
    <property type="term" value="P:cell adhesion"/>
    <property type="evidence" value="ECO:0000266"/>
    <property type="project" value="RGD"/>
</dbReference>
<dbReference type="GO" id="GO:0033627">
    <property type="term" value="P:cell adhesion mediated by integrin"/>
    <property type="evidence" value="ECO:0000318"/>
    <property type="project" value="GO_Central"/>
</dbReference>
<dbReference type="GO" id="GO:0060326">
    <property type="term" value="P:cell chemotaxis"/>
    <property type="evidence" value="ECO:0000315"/>
    <property type="project" value="RGD"/>
</dbReference>
<dbReference type="GO" id="GO:0098609">
    <property type="term" value="P:cell-cell adhesion"/>
    <property type="evidence" value="ECO:0000318"/>
    <property type="project" value="GO_Central"/>
</dbReference>
<dbReference type="GO" id="GO:0007160">
    <property type="term" value="P:cell-matrix adhesion"/>
    <property type="evidence" value="ECO:0000266"/>
    <property type="project" value="RGD"/>
</dbReference>
<dbReference type="GO" id="GO:0045123">
    <property type="term" value="P:cellular extravasation"/>
    <property type="evidence" value="ECO:0000266"/>
    <property type="project" value="RGD"/>
</dbReference>
<dbReference type="GO" id="GO:0007229">
    <property type="term" value="P:integrin-mediated signaling pathway"/>
    <property type="evidence" value="ECO:0000318"/>
    <property type="project" value="GO_Central"/>
</dbReference>
<dbReference type="GO" id="GO:0008285">
    <property type="term" value="P:negative regulation of cell population proliferation"/>
    <property type="evidence" value="ECO:0000250"/>
    <property type="project" value="UniProtKB"/>
</dbReference>
<dbReference type="GO" id="GO:0042059">
    <property type="term" value="P:negative regulation of epidermal growth factor receptor signaling pathway"/>
    <property type="evidence" value="ECO:0000250"/>
    <property type="project" value="UniProtKB"/>
</dbReference>
<dbReference type="GO" id="GO:0048812">
    <property type="term" value="P:neuron projection morphogenesis"/>
    <property type="evidence" value="ECO:0000315"/>
    <property type="project" value="RGD"/>
</dbReference>
<dbReference type="GO" id="GO:0030593">
    <property type="term" value="P:neutrophil chemotaxis"/>
    <property type="evidence" value="ECO:0000266"/>
    <property type="project" value="RGD"/>
</dbReference>
<dbReference type="GO" id="GO:0043410">
    <property type="term" value="P:positive regulation of MAPK cascade"/>
    <property type="evidence" value="ECO:0000315"/>
    <property type="project" value="RGD"/>
</dbReference>
<dbReference type="GO" id="GO:0043525">
    <property type="term" value="P:positive regulation of neuron apoptotic process"/>
    <property type="evidence" value="ECO:0000315"/>
    <property type="project" value="RGD"/>
</dbReference>
<dbReference type="GO" id="GO:0042311">
    <property type="term" value="P:vasodilation"/>
    <property type="evidence" value="ECO:0000315"/>
    <property type="project" value="RGD"/>
</dbReference>
<dbReference type="CDD" id="cd01469">
    <property type="entry name" value="vWA_integrins_alpha_subunit"/>
    <property type="match status" value="1"/>
</dbReference>
<dbReference type="FunFam" id="2.130.10.130:FF:000001">
    <property type="entry name" value="Integrin subunit alpha 10"/>
    <property type="match status" value="1"/>
</dbReference>
<dbReference type="FunFam" id="3.40.50.410:FF:000012">
    <property type="entry name" value="Integrin, alpha 10"/>
    <property type="match status" value="1"/>
</dbReference>
<dbReference type="FunFam" id="2.60.40.1460:FF:000001">
    <property type="entry name" value="Integrin, alpha V"/>
    <property type="match status" value="1"/>
</dbReference>
<dbReference type="Gene3D" id="1.20.5.930">
    <property type="entry name" value="Bicelle-embedded integrin alpha(iib) transmembrane segment"/>
    <property type="match status" value="1"/>
</dbReference>
<dbReference type="Gene3D" id="2.130.10.130">
    <property type="entry name" value="Integrin alpha, N-terminal"/>
    <property type="match status" value="1"/>
</dbReference>
<dbReference type="Gene3D" id="2.60.40.1460">
    <property type="entry name" value="Integrin domains. Chain A, domain 2"/>
    <property type="match status" value="1"/>
</dbReference>
<dbReference type="Gene3D" id="2.60.40.1510">
    <property type="entry name" value="ntegrin, alpha v. Chain A, domain 3"/>
    <property type="match status" value="1"/>
</dbReference>
<dbReference type="Gene3D" id="2.60.40.1530">
    <property type="entry name" value="ntegrin, alpha v. Chain A, domain 4"/>
    <property type="match status" value="1"/>
</dbReference>
<dbReference type="Gene3D" id="3.40.50.410">
    <property type="entry name" value="von Willebrand factor, type A domain"/>
    <property type="match status" value="1"/>
</dbReference>
<dbReference type="InterPro" id="IPR013517">
    <property type="entry name" value="FG-GAP"/>
</dbReference>
<dbReference type="InterPro" id="IPR013519">
    <property type="entry name" value="Int_alpha_beta-p"/>
</dbReference>
<dbReference type="InterPro" id="IPR000413">
    <property type="entry name" value="Integrin_alpha"/>
</dbReference>
<dbReference type="InterPro" id="IPR018184">
    <property type="entry name" value="Integrin_alpha_C_CS"/>
</dbReference>
<dbReference type="InterPro" id="IPR013649">
    <property type="entry name" value="Integrin_alpha_Ig-like_1"/>
</dbReference>
<dbReference type="InterPro" id="IPR048285">
    <property type="entry name" value="Integrin_alpha_Ig-like_2"/>
</dbReference>
<dbReference type="InterPro" id="IPR048286">
    <property type="entry name" value="Integrin_alpha_Ig-like_3"/>
</dbReference>
<dbReference type="InterPro" id="IPR028994">
    <property type="entry name" value="Integrin_alpha_N"/>
</dbReference>
<dbReference type="InterPro" id="IPR032695">
    <property type="entry name" value="Integrin_dom_sf"/>
</dbReference>
<dbReference type="InterPro" id="IPR002035">
    <property type="entry name" value="VWF_A"/>
</dbReference>
<dbReference type="InterPro" id="IPR036465">
    <property type="entry name" value="vWFA_dom_sf"/>
</dbReference>
<dbReference type="PANTHER" id="PTHR23220">
    <property type="entry name" value="INTEGRIN ALPHA"/>
    <property type="match status" value="1"/>
</dbReference>
<dbReference type="PANTHER" id="PTHR23220:SF22">
    <property type="entry name" value="INTEGRIN ALPHA-1"/>
    <property type="match status" value="1"/>
</dbReference>
<dbReference type="Pfam" id="PF01839">
    <property type="entry name" value="FG-GAP"/>
    <property type="match status" value="2"/>
</dbReference>
<dbReference type="Pfam" id="PF08441">
    <property type="entry name" value="Integrin_A_Ig_1"/>
    <property type="match status" value="1"/>
</dbReference>
<dbReference type="Pfam" id="PF20805">
    <property type="entry name" value="Integrin_A_Ig_2"/>
    <property type="match status" value="1"/>
</dbReference>
<dbReference type="Pfam" id="PF20806">
    <property type="entry name" value="Integrin_A_Ig_3"/>
    <property type="match status" value="1"/>
</dbReference>
<dbReference type="Pfam" id="PF00092">
    <property type="entry name" value="VWA"/>
    <property type="match status" value="1"/>
</dbReference>
<dbReference type="PRINTS" id="PR01185">
    <property type="entry name" value="INTEGRINA"/>
</dbReference>
<dbReference type="PRINTS" id="PR00453">
    <property type="entry name" value="VWFADOMAIN"/>
</dbReference>
<dbReference type="SMART" id="SM00191">
    <property type="entry name" value="Int_alpha"/>
    <property type="match status" value="5"/>
</dbReference>
<dbReference type="SMART" id="SM00327">
    <property type="entry name" value="VWA"/>
    <property type="match status" value="1"/>
</dbReference>
<dbReference type="SUPFAM" id="SSF69318">
    <property type="entry name" value="Integrin alpha N-terminal domain"/>
    <property type="match status" value="1"/>
</dbReference>
<dbReference type="SUPFAM" id="SSF69179">
    <property type="entry name" value="Integrin domains"/>
    <property type="match status" value="3"/>
</dbReference>
<dbReference type="SUPFAM" id="SSF53300">
    <property type="entry name" value="vWA-like"/>
    <property type="match status" value="1"/>
</dbReference>
<dbReference type="PROSITE" id="PS51470">
    <property type="entry name" value="FG_GAP"/>
    <property type="match status" value="7"/>
</dbReference>
<dbReference type="PROSITE" id="PS00242">
    <property type="entry name" value="INTEGRIN_ALPHA"/>
    <property type="match status" value="1"/>
</dbReference>
<dbReference type="PROSITE" id="PS50234">
    <property type="entry name" value="VWFA"/>
    <property type="match status" value="1"/>
</dbReference>
<name>ITA1_RAT</name>
<comment type="function">
    <text evidence="1">Integrin alpha-1/beta-1 is a receptor for laminin and collagen. It recognizes the proline-hydroxylated sequence G-F-P-G-E-R in collagen. Involved in anchorage-dependent, negative regulation of EGF-stimulated cell growth (By similarity).</text>
</comment>
<comment type="subunit">
    <text evidence="1">Heterodimer of an alpha and a beta subunit. Alpha-1 associates with beta-1 (By similarity). Interacts with RAB21 (By similarity). Interacts (via cytoplasmic domain) with PTPN2; activates PTPN2 phosphatase activity towards EGFR and negatively regulates EGF signaling (By similarity).</text>
</comment>
<comment type="subcellular location">
    <subcellularLocation>
        <location>Membrane</location>
        <topology>Single-pass type I membrane protein</topology>
    </subcellularLocation>
</comment>
<comment type="domain">
    <text>The integrin I-domain (insert) is a VWFA domain. Integrins with I-domains do not undergo protease cleavage.</text>
</comment>
<comment type="similarity">
    <text evidence="6">Belongs to the integrin alpha chain family.</text>
</comment>
<gene>
    <name type="primary">Itga1</name>
</gene>
<protein>
    <recommendedName>
        <fullName>Integrin alpha-1</fullName>
    </recommendedName>
    <alternativeName>
        <fullName>CD49 antigen-like family member A</fullName>
    </alternativeName>
    <alternativeName>
        <fullName>Laminin and collagen receptor</fullName>
    </alternativeName>
    <alternativeName>
        <fullName>VLA-1</fullName>
    </alternativeName>
    <cdAntigenName>CD49a</cdAntigenName>
</protein>
<sequence length="1180" mass="130809">MVPRRPASLEVTVACIWLLTVILGFCVSFNVDVKNSMSFSGPVEDMFGYTVQQYENEEGKWVLIGSPLVGQPKARTGDVYKCPVGRERAMPCVKLDLPVNTSIPNVTEIKENMTFGSTLVTNPNGGFLACGPLYAYRCGHLHYTTGICSDVSPTFQVVNSFAPVQECSTQLDIVIVLDGSNSIYPWESVIAFLNDLLKRMDIGPKQTQVGIVQYGENVTHEFNLNKYSSTEEVLVAANKIGRQGGLQTMTALGIDTARKEAFTEARGARRGVKKVMVIVTDGESHDNYRLKQVIQDCEDENIQRFSIAILGHYNRGNLSTEKFVEEIKSIASEPTEKHFFNVSDELALVTIVKALGERIFALEATADQSAASFEMEMSQTGFSAHYSQDWVMLGAVGAYDWNGTVVMQKANQMVIPHNTTFQTEPAKMNEPLASYLGYTVNSATIPGDVLYIAGQPRYNHTGQVVIYKMEDGNINILQTLGGEQIGSYFGSVLTTIDIDKDSYTDLLLVGAPMYMGTEKEEQGKVYVYAVNQTRFEYQMSLEPIRQTCCSSLKDNSCTKENKNEPCGARFGTAIAAVKDLNVDGFNDVVIGAPLEDDHAGAVYIYHGSGKTIREAYAQRIPSGGDGKTLKFFGQSIHGEMDLNGDGLTDVTIGGLGGAALFWARDVAVVKVTMNFEPNKVNIQKKNCRVEGKETVCINATMCFHVKLKSKEDSIYEADLQYRVTLDSLRQISRSFFSGTQERKIQRNITVRESECIRHSFYMLDKHDFQDSVRVTLDFNLTDPENGPVLDDALPNSVHEHIPFAKDCGNKERCISDLTLNVSTTEKSLLIVKSQHDKFNVSLTVKNKGDSAYNTRTVVQHSPNLIFSGIEEIQKDSCESNQNITCRVGYPFLRAGETVTFKIIFQFNTSHLSENAIIHLSATSDSEEPLESLNDNEVNISIPVKYEVGLQFYSSASEHHISVAANETIPEFINSTEDIGNEINVFYTIRKRGHFPMPELQLSISFPNLTADGYPVLYPIGWSSSDNVNCRPRSLEDPFGINSGKKMTISKSEVLKRGTIQDCSSTCGVATITCSLLPSDLSQVNVSLLLWKPTFIRAHFSSLNLTLRGELKSENSSLTLSSSNRKRELAIQISKDGLPGRVPLWVILLSAFAGLLLLMLLILALWKIGFFKRPLKKKMEK</sequence>